<evidence type="ECO:0000256" key="1">
    <source>
        <dbReference type="SAM" id="MobiDB-lite"/>
    </source>
</evidence>
<reference key="1">
    <citation type="journal article" date="2000" name="Nature">
        <title>Sequence and analysis of chromosome 3 of the plant Arabidopsis thaliana.</title>
        <authorList>
            <person name="Salanoubat M."/>
            <person name="Lemcke K."/>
            <person name="Rieger M."/>
            <person name="Ansorge W."/>
            <person name="Unseld M."/>
            <person name="Fartmann B."/>
            <person name="Valle G."/>
            <person name="Bloecker H."/>
            <person name="Perez-Alonso M."/>
            <person name="Obermaier B."/>
            <person name="Delseny M."/>
            <person name="Boutry M."/>
            <person name="Grivell L.A."/>
            <person name="Mache R."/>
            <person name="Puigdomenech P."/>
            <person name="De Simone V."/>
            <person name="Choisne N."/>
            <person name="Artiguenave F."/>
            <person name="Robert C."/>
            <person name="Brottier P."/>
            <person name="Wincker P."/>
            <person name="Cattolico L."/>
            <person name="Weissenbach J."/>
            <person name="Saurin W."/>
            <person name="Quetier F."/>
            <person name="Schaefer M."/>
            <person name="Mueller-Auer S."/>
            <person name="Gabel C."/>
            <person name="Fuchs M."/>
            <person name="Benes V."/>
            <person name="Wurmbach E."/>
            <person name="Drzonek H."/>
            <person name="Erfle H."/>
            <person name="Jordan N."/>
            <person name="Bangert S."/>
            <person name="Wiedelmann R."/>
            <person name="Kranz H."/>
            <person name="Voss H."/>
            <person name="Holland R."/>
            <person name="Brandt P."/>
            <person name="Nyakatura G."/>
            <person name="Vezzi A."/>
            <person name="D'Angelo M."/>
            <person name="Pallavicini A."/>
            <person name="Toppo S."/>
            <person name="Simionati B."/>
            <person name="Conrad A."/>
            <person name="Hornischer K."/>
            <person name="Kauer G."/>
            <person name="Loehnert T.-H."/>
            <person name="Nordsiek G."/>
            <person name="Reichelt J."/>
            <person name="Scharfe M."/>
            <person name="Schoen O."/>
            <person name="Bargues M."/>
            <person name="Terol J."/>
            <person name="Climent J."/>
            <person name="Navarro P."/>
            <person name="Collado C."/>
            <person name="Perez-Perez A."/>
            <person name="Ottenwaelder B."/>
            <person name="Duchemin D."/>
            <person name="Cooke R."/>
            <person name="Laudie M."/>
            <person name="Berger-Llauro C."/>
            <person name="Purnelle B."/>
            <person name="Masuy D."/>
            <person name="de Haan M."/>
            <person name="Maarse A.C."/>
            <person name="Alcaraz J.-P."/>
            <person name="Cottet A."/>
            <person name="Casacuberta E."/>
            <person name="Monfort A."/>
            <person name="Argiriou A."/>
            <person name="Flores M."/>
            <person name="Liguori R."/>
            <person name="Vitale D."/>
            <person name="Mannhaupt G."/>
            <person name="Haase D."/>
            <person name="Schoof H."/>
            <person name="Rudd S."/>
            <person name="Zaccaria P."/>
            <person name="Mewes H.-W."/>
            <person name="Mayer K.F.X."/>
            <person name="Kaul S."/>
            <person name="Town C.D."/>
            <person name="Koo H.L."/>
            <person name="Tallon L.J."/>
            <person name="Jenkins J."/>
            <person name="Rooney T."/>
            <person name="Rizzo M."/>
            <person name="Walts A."/>
            <person name="Utterback T."/>
            <person name="Fujii C.Y."/>
            <person name="Shea T.P."/>
            <person name="Creasy T.H."/>
            <person name="Haas B."/>
            <person name="Maiti R."/>
            <person name="Wu D."/>
            <person name="Peterson J."/>
            <person name="Van Aken S."/>
            <person name="Pai G."/>
            <person name="Militscher J."/>
            <person name="Sellers P."/>
            <person name="Gill J.E."/>
            <person name="Feldblyum T.V."/>
            <person name="Preuss D."/>
            <person name="Lin X."/>
            <person name="Nierman W.C."/>
            <person name="Salzberg S.L."/>
            <person name="White O."/>
            <person name="Venter J.C."/>
            <person name="Fraser C.M."/>
            <person name="Kaneko T."/>
            <person name="Nakamura Y."/>
            <person name="Sato S."/>
            <person name="Kato T."/>
            <person name="Asamizu E."/>
            <person name="Sasamoto S."/>
            <person name="Kimura T."/>
            <person name="Idesawa K."/>
            <person name="Kawashima K."/>
            <person name="Kishida Y."/>
            <person name="Kiyokawa C."/>
            <person name="Kohara M."/>
            <person name="Matsumoto M."/>
            <person name="Matsuno A."/>
            <person name="Muraki A."/>
            <person name="Nakayama S."/>
            <person name="Nakazaki N."/>
            <person name="Shinpo S."/>
            <person name="Takeuchi C."/>
            <person name="Wada T."/>
            <person name="Watanabe A."/>
            <person name="Yamada M."/>
            <person name="Yasuda M."/>
            <person name="Tabata S."/>
        </authorList>
    </citation>
    <scope>NUCLEOTIDE SEQUENCE [LARGE SCALE GENOMIC DNA]</scope>
    <source>
        <strain>cv. Columbia</strain>
    </source>
</reference>
<reference key="2">
    <citation type="journal article" date="2017" name="Plant J.">
        <title>Araport11: a complete reannotation of the Arabidopsis thaliana reference genome.</title>
        <authorList>
            <person name="Cheng C.Y."/>
            <person name="Krishnakumar V."/>
            <person name="Chan A.P."/>
            <person name="Thibaud-Nissen F."/>
            <person name="Schobel S."/>
            <person name="Town C.D."/>
        </authorList>
    </citation>
    <scope>GENOME REANNOTATION</scope>
    <source>
        <strain>cv. Columbia</strain>
    </source>
</reference>
<protein>
    <recommendedName>
        <fullName>Putative F-box protein At3g10240</fullName>
    </recommendedName>
</protein>
<proteinExistence type="predicted"/>
<dbReference type="EMBL" id="AC009400">
    <property type="protein sequence ID" value="AAF02818.1"/>
    <property type="molecule type" value="Genomic_DNA"/>
</dbReference>
<dbReference type="EMBL" id="CP002686">
    <property type="protein sequence ID" value="AEE74876.1"/>
    <property type="molecule type" value="Genomic_DNA"/>
</dbReference>
<dbReference type="RefSeq" id="NP_187635.1">
    <property type="nucleotide sequence ID" value="NM_111859.1"/>
</dbReference>
<dbReference type="SMR" id="Q9SS35"/>
<dbReference type="FunCoup" id="Q9SS35">
    <property type="interactions" value="21"/>
</dbReference>
<dbReference type="iPTMnet" id="Q9SS35"/>
<dbReference type="PaxDb" id="3702-AT3G10240.1"/>
<dbReference type="EnsemblPlants" id="AT3G10240.1">
    <property type="protein sequence ID" value="AT3G10240.1"/>
    <property type="gene ID" value="AT3G10240"/>
</dbReference>
<dbReference type="GeneID" id="820186"/>
<dbReference type="Gramene" id="AT3G10240.1">
    <property type="protein sequence ID" value="AT3G10240.1"/>
    <property type="gene ID" value="AT3G10240"/>
</dbReference>
<dbReference type="KEGG" id="ath:AT3G10240"/>
<dbReference type="Araport" id="AT3G10240"/>
<dbReference type="TAIR" id="AT3G10240"/>
<dbReference type="HOGENOM" id="CLU_027176_8_0_1"/>
<dbReference type="InParanoid" id="Q9SS35"/>
<dbReference type="OMA" id="CFESENP"/>
<dbReference type="PhylomeDB" id="Q9SS35"/>
<dbReference type="PRO" id="PR:Q9SS35"/>
<dbReference type="Proteomes" id="UP000006548">
    <property type="component" value="Chromosome 3"/>
</dbReference>
<dbReference type="ExpressionAtlas" id="Q9SS35">
    <property type="expression patterns" value="baseline and differential"/>
</dbReference>
<dbReference type="CDD" id="cd22157">
    <property type="entry name" value="F-box_AtFBW1-like"/>
    <property type="match status" value="1"/>
</dbReference>
<dbReference type="InterPro" id="IPR013187">
    <property type="entry name" value="F-box-assoc_dom_typ3"/>
</dbReference>
<dbReference type="InterPro" id="IPR017451">
    <property type="entry name" value="F-box-assoc_interact_dom"/>
</dbReference>
<dbReference type="InterPro" id="IPR036047">
    <property type="entry name" value="F-box-like_dom_sf"/>
</dbReference>
<dbReference type="InterPro" id="IPR001810">
    <property type="entry name" value="F-box_dom"/>
</dbReference>
<dbReference type="NCBIfam" id="TIGR01640">
    <property type="entry name" value="F_box_assoc_1"/>
    <property type="match status" value="1"/>
</dbReference>
<dbReference type="PANTHER" id="PTHR31111">
    <property type="entry name" value="BNAA05G37150D PROTEIN-RELATED"/>
    <property type="match status" value="1"/>
</dbReference>
<dbReference type="PANTHER" id="PTHR31111:SF42">
    <property type="entry name" value="F-BOX DOMAIN-CONTAINING PROTEIN"/>
    <property type="match status" value="1"/>
</dbReference>
<dbReference type="Pfam" id="PF00646">
    <property type="entry name" value="F-box"/>
    <property type="match status" value="1"/>
</dbReference>
<dbReference type="Pfam" id="PF08268">
    <property type="entry name" value="FBA_3"/>
    <property type="match status" value="1"/>
</dbReference>
<dbReference type="SMART" id="SM00256">
    <property type="entry name" value="FBOX"/>
    <property type="match status" value="1"/>
</dbReference>
<dbReference type="SUPFAM" id="SSF81383">
    <property type="entry name" value="F-box domain"/>
    <property type="match status" value="1"/>
</dbReference>
<feature type="chain" id="PRO_0000283408" description="Putative F-box protein At3g10240">
    <location>
        <begin position="1"/>
        <end position="389"/>
    </location>
</feature>
<feature type="domain" description="F-box">
    <location>
        <begin position="21"/>
        <end position="66"/>
    </location>
</feature>
<feature type="region of interest" description="Disordered" evidence="1">
    <location>
        <begin position="1"/>
        <end position="26"/>
    </location>
</feature>
<feature type="compositionally biased region" description="Basic residues" evidence="1">
    <location>
        <begin position="9"/>
        <end position="21"/>
    </location>
</feature>
<gene>
    <name type="ordered locus">At3g10240</name>
    <name type="ORF">F14P13.16</name>
</gene>
<accession>Q9SS35</accession>
<keyword id="KW-1185">Reference proteome</keyword>
<name>FB137_ARATH</name>
<organism>
    <name type="scientific">Arabidopsis thaliana</name>
    <name type="common">Mouse-ear cress</name>
    <dbReference type="NCBI Taxonomy" id="3702"/>
    <lineage>
        <taxon>Eukaryota</taxon>
        <taxon>Viridiplantae</taxon>
        <taxon>Streptophyta</taxon>
        <taxon>Embryophyta</taxon>
        <taxon>Tracheophyta</taxon>
        <taxon>Spermatophyta</taxon>
        <taxon>Magnoliopsida</taxon>
        <taxon>eudicotyledons</taxon>
        <taxon>Gunneridae</taxon>
        <taxon>Pentapetalae</taxon>
        <taxon>rosids</taxon>
        <taxon>malvids</taxon>
        <taxon>Brassicales</taxon>
        <taxon>Brassicaceae</taxon>
        <taxon>Camelineae</taxon>
        <taxon>Arabidopsis</taxon>
    </lineage>
</organism>
<sequence>MEQQEEKRKIKAYQRKSKRSKSGSSSIPLDLVSEILLRLPEKSVARFRCVSKPWSSITTEPYFINLLTTRSPRLLLCFKANEKFFVSSIPQHRQTFETWNKSHSYSQLIDRYHMEFSEEMNYFPPTESVNGLICFQESARLIVWNPSTRQLLILPKPNGNSNDLTIFLGYDPVEGKHKVMCMEFSATYDTCRVLTLGSAQKLWRTVKTHNKHRSDYYDSGRCINGVVYHIAYVKDMCVWVLMSFDVRSEIFDMIELPSSDVHKDVLIDYNGRLACVGREIIEKNGIRLWILEKHNKWSSKDFLAPLVHIDKSLSTNKFLLKGFTHAGEIIYVESMFHKSAKIFFYDPVRNTSRRFELKGFTDDEFVLSNEHGYTLHVFPNHVESQISFT</sequence>